<comment type="catalytic activity">
    <reaction evidence="1">
        <text>acetaldehyde + NAD(+) + CoA = acetyl-CoA + NADH + H(+)</text>
        <dbReference type="Rhea" id="RHEA:23288"/>
        <dbReference type="ChEBI" id="CHEBI:15343"/>
        <dbReference type="ChEBI" id="CHEBI:15378"/>
        <dbReference type="ChEBI" id="CHEBI:57287"/>
        <dbReference type="ChEBI" id="CHEBI:57288"/>
        <dbReference type="ChEBI" id="CHEBI:57540"/>
        <dbReference type="ChEBI" id="CHEBI:57945"/>
        <dbReference type="EC" id="1.2.1.10"/>
    </reaction>
</comment>
<comment type="similarity">
    <text evidence="1">Belongs to the acetaldehyde dehydrogenase family.</text>
</comment>
<comment type="sequence caution" evidence="2">
    <conflict type="erroneous initiation">
        <sequence resource="EMBL-CDS" id="ACM04754"/>
    </conflict>
</comment>
<organism>
    <name type="scientific">Thermomicrobium roseum (strain ATCC 27502 / DSM 5159 / P-2)</name>
    <dbReference type="NCBI Taxonomy" id="309801"/>
    <lineage>
        <taxon>Bacteria</taxon>
        <taxon>Pseudomonadati</taxon>
        <taxon>Thermomicrobiota</taxon>
        <taxon>Thermomicrobia</taxon>
        <taxon>Thermomicrobiales</taxon>
        <taxon>Thermomicrobiaceae</taxon>
        <taxon>Thermomicrobium</taxon>
    </lineage>
</organism>
<gene>
    <name type="ordered locus">trd_1393</name>
</gene>
<keyword id="KW-0058">Aromatic hydrocarbons catabolism</keyword>
<keyword id="KW-0520">NAD</keyword>
<keyword id="KW-0560">Oxidoreductase</keyword>
<keyword id="KW-1185">Reference proteome</keyword>
<proteinExistence type="inferred from homology"/>
<dbReference type="EC" id="1.2.1.10" evidence="1"/>
<dbReference type="EMBL" id="CP001275">
    <property type="protein sequence ID" value="ACM04754.1"/>
    <property type="status" value="ALT_INIT"/>
    <property type="molecule type" value="Genomic_DNA"/>
</dbReference>
<dbReference type="RefSeq" id="WP_041436016.1">
    <property type="nucleotide sequence ID" value="NC_011959.1"/>
</dbReference>
<dbReference type="SMR" id="B9L2J1"/>
<dbReference type="STRING" id="309801.trd_1393"/>
<dbReference type="KEGG" id="tro:trd_1393"/>
<dbReference type="eggNOG" id="COG4569">
    <property type="taxonomic scope" value="Bacteria"/>
</dbReference>
<dbReference type="HOGENOM" id="CLU_062208_0_0_0"/>
<dbReference type="OrthoDB" id="9783105at2"/>
<dbReference type="Proteomes" id="UP000000447">
    <property type="component" value="Chromosome"/>
</dbReference>
<dbReference type="GO" id="GO:0008774">
    <property type="term" value="F:acetaldehyde dehydrogenase (acetylating) activity"/>
    <property type="evidence" value="ECO:0007669"/>
    <property type="project" value="UniProtKB-UniRule"/>
</dbReference>
<dbReference type="GO" id="GO:0051287">
    <property type="term" value="F:NAD binding"/>
    <property type="evidence" value="ECO:0007669"/>
    <property type="project" value="UniProtKB-UniRule"/>
</dbReference>
<dbReference type="GO" id="GO:0009056">
    <property type="term" value="P:catabolic process"/>
    <property type="evidence" value="ECO:0007669"/>
    <property type="project" value="UniProtKB-KW"/>
</dbReference>
<dbReference type="CDD" id="cd23933">
    <property type="entry name" value="ALDH_C"/>
    <property type="match status" value="1"/>
</dbReference>
<dbReference type="Gene3D" id="3.30.360.10">
    <property type="entry name" value="Dihydrodipicolinate Reductase, domain 2"/>
    <property type="match status" value="1"/>
</dbReference>
<dbReference type="Gene3D" id="3.40.50.720">
    <property type="entry name" value="NAD(P)-binding Rossmann-like Domain"/>
    <property type="match status" value="1"/>
</dbReference>
<dbReference type="HAMAP" id="MF_01657">
    <property type="entry name" value="Ac_ald_DH_ac"/>
    <property type="match status" value="1"/>
</dbReference>
<dbReference type="InterPro" id="IPR003361">
    <property type="entry name" value="Acetaldehyde_dehydrogenase"/>
</dbReference>
<dbReference type="InterPro" id="IPR015426">
    <property type="entry name" value="Acetylaldehyde_DH_C"/>
</dbReference>
<dbReference type="InterPro" id="IPR036291">
    <property type="entry name" value="NAD(P)-bd_dom_sf"/>
</dbReference>
<dbReference type="InterPro" id="IPR000534">
    <property type="entry name" value="Semialdehyde_DH_NAD-bd"/>
</dbReference>
<dbReference type="NCBIfam" id="TIGR03215">
    <property type="entry name" value="ac_ald_DH_ac"/>
    <property type="match status" value="1"/>
</dbReference>
<dbReference type="NCBIfam" id="NF006157">
    <property type="entry name" value="PRK08300.1"/>
    <property type="match status" value="1"/>
</dbReference>
<dbReference type="Pfam" id="PF09290">
    <property type="entry name" value="AcetDehyd-dimer"/>
    <property type="match status" value="1"/>
</dbReference>
<dbReference type="Pfam" id="PF01118">
    <property type="entry name" value="Semialdhyde_dh"/>
    <property type="match status" value="1"/>
</dbReference>
<dbReference type="PIRSF" id="PIRSF015689">
    <property type="entry name" value="Actaldh_dh_actl"/>
    <property type="match status" value="1"/>
</dbReference>
<dbReference type="SMART" id="SM00859">
    <property type="entry name" value="Semialdhyde_dh"/>
    <property type="match status" value="1"/>
</dbReference>
<dbReference type="SUPFAM" id="SSF55347">
    <property type="entry name" value="Glyceraldehyde-3-phosphate dehydrogenase-like, C-terminal domain"/>
    <property type="match status" value="1"/>
</dbReference>
<dbReference type="SUPFAM" id="SSF51735">
    <property type="entry name" value="NAD(P)-binding Rossmann-fold domains"/>
    <property type="match status" value="1"/>
</dbReference>
<protein>
    <recommendedName>
        <fullName evidence="1">Acetaldehyde dehydrogenase</fullName>
        <ecNumber evidence="1">1.2.1.10</ecNumber>
    </recommendedName>
    <alternativeName>
        <fullName evidence="1">Acetaldehyde dehydrogenase [acetylating]</fullName>
    </alternativeName>
</protein>
<name>ACDH_THERP</name>
<reference key="1">
    <citation type="journal article" date="2009" name="PLoS ONE">
        <title>Complete genome sequence of the aerobic CO-oxidizing thermophile Thermomicrobium roseum.</title>
        <authorList>
            <person name="Wu D."/>
            <person name="Raymond J."/>
            <person name="Wu M."/>
            <person name="Chatterji S."/>
            <person name="Ren Q."/>
            <person name="Graham J.E."/>
            <person name="Bryant D.A."/>
            <person name="Robb F."/>
            <person name="Colman A."/>
            <person name="Tallon L.J."/>
            <person name="Badger J.H."/>
            <person name="Madupu R."/>
            <person name="Ward N.L."/>
            <person name="Eisen J.A."/>
        </authorList>
    </citation>
    <scope>NUCLEOTIDE SEQUENCE [LARGE SCALE GENOMIC DNA]</scope>
    <source>
        <strain>ATCC 27502 / DSM 5159 / P-2</strain>
    </source>
</reference>
<evidence type="ECO:0000255" key="1">
    <source>
        <dbReference type="HAMAP-Rule" id="MF_01657"/>
    </source>
</evidence>
<evidence type="ECO:0000305" key="2"/>
<feature type="chain" id="PRO_0000387748" description="Acetaldehyde dehydrogenase">
    <location>
        <begin position="1"/>
        <end position="308"/>
    </location>
</feature>
<feature type="active site" description="Acyl-thioester intermediate" evidence="1">
    <location>
        <position position="129"/>
    </location>
</feature>
<feature type="binding site" evidence="1">
    <location>
        <begin position="14"/>
        <end position="17"/>
    </location>
    <ligand>
        <name>NAD(+)</name>
        <dbReference type="ChEBI" id="CHEBI:57540"/>
    </ligand>
</feature>
<feature type="binding site" evidence="1">
    <location>
        <begin position="160"/>
        <end position="168"/>
    </location>
    <ligand>
        <name>NAD(+)</name>
        <dbReference type="ChEBI" id="CHEBI:57540"/>
    </ligand>
</feature>
<feature type="binding site" evidence="1">
    <location>
        <position position="280"/>
    </location>
    <ligand>
        <name>NAD(+)</name>
        <dbReference type="ChEBI" id="CHEBI:57540"/>
    </ligand>
</feature>
<sequence>MGERQAVKVAILGTGNIGTDLMYKLLRNPGHMELAMFAGIDPQSEGIARAKKLGIPTSYEGIKAVLDDPEIRIVFDATSAKAHVRHAKMLREAGKIAIDLTPAARGPYVVPPVNLGAHLDKDNVNLITCGGQATIPLVFAVSRVVPVRYAEIVSTVASKSAGPGTRQNIDEFTFTTAHGLEAIGGAEQGKAIIILNPAEPPIIMRNTVYVIPANEEFDQAAIVASVDQMVAEVQQYVPGYRLKDAPVFDRRRTPWGERTIIAMLLEVEGAGDFLPPYSGNLDIMTAAAWRVGELFAQHLLGIRQEVAA</sequence>
<accession>B9L2J1</accession>